<accession>Q1R5H7</accession>
<comment type="function">
    <text evidence="1">Part of the ABC transporter complex UgpBAEC involved in sn-glycerol-3-phosphate (G3P) import. Probably responsible for the translocation of the substrate across the membrane.</text>
</comment>
<comment type="subunit">
    <text evidence="1">The complex is composed of two ATP-binding proteins (UgpC), two transmembrane proteins (UgpA and UgpE) and a solute-binding protein (UgpB).</text>
</comment>
<comment type="subcellular location">
    <subcellularLocation>
        <location evidence="1">Cell inner membrane</location>
        <topology evidence="2">Multi-pass membrane protein</topology>
    </subcellularLocation>
</comment>
<comment type="similarity">
    <text evidence="4">Belongs to the binding-protein-dependent transport system permease family. UgpAE subfamily.</text>
</comment>
<proteinExistence type="inferred from homology"/>
<sequence>MIENRPWLTIFSHTMLILGIAVILFPLYVAFVAATLDKQEVYAAPMTLIPGTHLLENIHNIWVNGVGTNSAPFWRMLLNSFVMAFSITLGKITVSMLSAFAIVWFRFPLRNLFFWMIFITLMLPVEVRIFPTVEVIANLKMLDSYAGLTLPLMASATATFLFRQFFMTLPDELVEAARIDGASPMRFFCDIVFPLSKTNLAALFVITFIYGWNQYLWPLLIITDVDLGTTVAGIKGMIATGEGTTEWNSVMAAMLLTLIPPVVIVLVMQRAFVRGLVDSEK</sequence>
<name>UGPE_ECOUT</name>
<feature type="chain" id="PRO_0000292679" description="sn-glycerol-3-phosphate transport system permease protein UgpE">
    <location>
        <begin position="1"/>
        <end position="281"/>
    </location>
</feature>
<feature type="transmembrane region" description="Helical" evidence="3">
    <location>
        <begin position="16"/>
        <end position="36"/>
    </location>
</feature>
<feature type="transmembrane region" description="Helical" evidence="3">
    <location>
        <begin position="85"/>
        <end position="105"/>
    </location>
</feature>
<feature type="transmembrane region" description="Helical" evidence="3">
    <location>
        <begin position="113"/>
        <end position="133"/>
    </location>
</feature>
<feature type="transmembrane region" description="Helical" evidence="3">
    <location>
        <begin position="142"/>
        <end position="162"/>
    </location>
</feature>
<feature type="transmembrane region" description="Helical" evidence="3">
    <location>
        <begin position="202"/>
        <end position="222"/>
    </location>
</feature>
<feature type="transmembrane region" description="Helical" evidence="3">
    <location>
        <begin position="247"/>
        <end position="267"/>
    </location>
</feature>
<feature type="domain" description="ABC transmembrane type-1" evidence="3">
    <location>
        <begin position="77"/>
        <end position="268"/>
    </location>
</feature>
<reference key="1">
    <citation type="journal article" date="2006" name="Proc. Natl. Acad. Sci. U.S.A.">
        <title>Identification of genes subject to positive selection in uropathogenic strains of Escherichia coli: a comparative genomics approach.</title>
        <authorList>
            <person name="Chen S.L."/>
            <person name="Hung C.-S."/>
            <person name="Xu J."/>
            <person name="Reigstad C.S."/>
            <person name="Magrini V."/>
            <person name="Sabo A."/>
            <person name="Blasiar D."/>
            <person name="Bieri T."/>
            <person name="Meyer R.R."/>
            <person name="Ozersky P."/>
            <person name="Armstrong J.R."/>
            <person name="Fulton R.S."/>
            <person name="Latreille J.P."/>
            <person name="Spieth J."/>
            <person name="Hooton T.M."/>
            <person name="Mardis E.R."/>
            <person name="Hultgren S.J."/>
            <person name="Gordon J.I."/>
        </authorList>
    </citation>
    <scope>NUCLEOTIDE SEQUENCE [LARGE SCALE GENOMIC DNA]</scope>
    <source>
        <strain>UTI89 / UPEC</strain>
    </source>
</reference>
<dbReference type="EMBL" id="CP000243">
    <property type="protein sequence ID" value="ABE09387.1"/>
    <property type="molecule type" value="Genomic_DNA"/>
</dbReference>
<dbReference type="RefSeq" id="WP_000572183.1">
    <property type="nucleotide sequence ID" value="NZ_CP064825.1"/>
</dbReference>
<dbReference type="SMR" id="Q1R5H7"/>
<dbReference type="GeneID" id="89518281"/>
<dbReference type="KEGG" id="eci:UTI89_C3958"/>
<dbReference type="HOGENOM" id="CLU_016047_1_1_6"/>
<dbReference type="Proteomes" id="UP000001952">
    <property type="component" value="Chromosome"/>
</dbReference>
<dbReference type="GO" id="GO:0005886">
    <property type="term" value="C:plasma membrane"/>
    <property type="evidence" value="ECO:0007669"/>
    <property type="project" value="UniProtKB-SubCell"/>
</dbReference>
<dbReference type="GO" id="GO:0055085">
    <property type="term" value="P:transmembrane transport"/>
    <property type="evidence" value="ECO:0007669"/>
    <property type="project" value="InterPro"/>
</dbReference>
<dbReference type="CDD" id="cd06261">
    <property type="entry name" value="TM_PBP2"/>
    <property type="match status" value="1"/>
</dbReference>
<dbReference type="FunFam" id="1.10.3720.10:FF:000042">
    <property type="entry name" value="sn-glycerol-3-phosphate transport system permease protein UgpE"/>
    <property type="match status" value="1"/>
</dbReference>
<dbReference type="Gene3D" id="1.10.3720.10">
    <property type="entry name" value="MetI-like"/>
    <property type="match status" value="1"/>
</dbReference>
<dbReference type="InterPro" id="IPR000515">
    <property type="entry name" value="MetI-like"/>
</dbReference>
<dbReference type="InterPro" id="IPR035906">
    <property type="entry name" value="MetI-like_sf"/>
</dbReference>
<dbReference type="NCBIfam" id="NF008210">
    <property type="entry name" value="PRK10973.1"/>
    <property type="match status" value="1"/>
</dbReference>
<dbReference type="PANTHER" id="PTHR43744">
    <property type="entry name" value="ABC TRANSPORTER PERMEASE PROTEIN MG189-RELATED-RELATED"/>
    <property type="match status" value="1"/>
</dbReference>
<dbReference type="PANTHER" id="PTHR43744:SF8">
    <property type="entry name" value="SN-GLYCEROL-3-PHOSPHATE TRANSPORT SYSTEM PERMEASE PROTEIN UGPE"/>
    <property type="match status" value="1"/>
</dbReference>
<dbReference type="Pfam" id="PF00528">
    <property type="entry name" value="BPD_transp_1"/>
    <property type="match status" value="1"/>
</dbReference>
<dbReference type="SUPFAM" id="SSF161098">
    <property type="entry name" value="MetI-like"/>
    <property type="match status" value="1"/>
</dbReference>
<dbReference type="PROSITE" id="PS50928">
    <property type="entry name" value="ABC_TM1"/>
    <property type="match status" value="1"/>
</dbReference>
<gene>
    <name type="primary">ugpE</name>
    <name type="ordered locus">UTI89_C3958</name>
</gene>
<evidence type="ECO:0000250" key="1">
    <source>
        <dbReference type="UniProtKB" id="P10906"/>
    </source>
</evidence>
<evidence type="ECO:0000255" key="2"/>
<evidence type="ECO:0000255" key="3">
    <source>
        <dbReference type="PROSITE-ProRule" id="PRU00441"/>
    </source>
</evidence>
<evidence type="ECO:0000305" key="4"/>
<organism>
    <name type="scientific">Escherichia coli (strain UTI89 / UPEC)</name>
    <dbReference type="NCBI Taxonomy" id="364106"/>
    <lineage>
        <taxon>Bacteria</taxon>
        <taxon>Pseudomonadati</taxon>
        <taxon>Pseudomonadota</taxon>
        <taxon>Gammaproteobacteria</taxon>
        <taxon>Enterobacterales</taxon>
        <taxon>Enterobacteriaceae</taxon>
        <taxon>Escherichia</taxon>
    </lineage>
</organism>
<protein>
    <recommendedName>
        <fullName evidence="1">sn-glycerol-3-phosphate transport system permease protein UgpE</fullName>
    </recommendedName>
</protein>
<keyword id="KW-0997">Cell inner membrane</keyword>
<keyword id="KW-1003">Cell membrane</keyword>
<keyword id="KW-0472">Membrane</keyword>
<keyword id="KW-0812">Transmembrane</keyword>
<keyword id="KW-1133">Transmembrane helix</keyword>
<keyword id="KW-0813">Transport</keyword>